<keyword id="KW-1015">Disulfide bond</keyword>
<keyword id="KW-0281">Fimbrium</keyword>
<keyword id="KW-0614">Plasmid</keyword>
<keyword id="KW-0732">Signal</keyword>
<reference key="1">
    <citation type="journal article" date="1987" name="Mol. Microbiol.">
        <title>Primary structure and subcellular localization of two fimbrial subunit-like proteins involved in the biosynthesis of K99 fibrillae.</title>
        <authorList>
            <person name="Roosendaal E."/>
            <person name="Jacobs A.A.C."/>
            <person name="Rathman P."/>
            <person name="Sondermeyer C."/>
            <person name="Stegehuis F."/>
            <person name="Oudega B."/>
            <person name="de Graaf F.K."/>
        </authorList>
    </citation>
    <scope>NUCLEOTIDE SEQUENCE [GENOMIC DNA]</scope>
</reference>
<reference key="2">
    <citation type="journal article" date="1993" name="Jpn. J. Vet. Res.">
        <title>Confirmed nucleotide sequence of fanF of Escherichia coli K99 fimbriae.</title>
        <authorList>
            <person name="Abe N."/>
            <person name="Moriishi K."/>
            <person name="Saito M."/>
            <person name="Naiki M."/>
        </authorList>
    </citation>
    <scope>NUCLEOTIDE SEQUENCE [GENOMIC DNA] OF 1-40</scope>
</reference>
<protein>
    <recommendedName>
        <fullName>Protein FanG</fullName>
    </recommendedName>
</protein>
<proteinExistence type="predicted"/>
<comment type="function">
    <text>Involved in the biosynthesis of K99 fimbriae.</text>
</comment>
<comment type="subcellular location">
    <subcellularLocation>
        <location>Fimbrium</location>
    </subcellularLocation>
</comment>
<sequence length="174" mass="19274">MKKLYKAITVICILMSNLQSAQGATKSVQVPIRTEVKIPTCQLEIDSSIDFSFVKIEDIISSRATSKEANLNFRCDAHVDNVRIMFVPGSNRTSSDKRVMHSGTTGLGYSLQWSRASSGYSDIGFNTQYQWSDSDAYQNLLSGKLRLKPVSFPGESLSKEGKVSSTINIEVTYD</sequence>
<organism>
    <name type="scientific">Escherichia coli</name>
    <dbReference type="NCBI Taxonomy" id="562"/>
    <lineage>
        <taxon>Bacteria</taxon>
        <taxon>Pseudomonadati</taxon>
        <taxon>Pseudomonadota</taxon>
        <taxon>Gammaproteobacteria</taxon>
        <taxon>Enterobacterales</taxon>
        <taxon>Enterobacteriaceae</taxon>
        <taxon>Escherichia</taxon>
    </lineage>
</organism>
<evidence type="ECO:0000250" key="1"/>
<evidence type="ECO:0000305" key="2"/>
<name>FANG_ECOLX</name>
<geneLocation type="plasmid">
    <name>pFK99</name>
</geneLocation>
<gene>
    <name type="primary">fanG</name>
</gene>
<accession>P20861</accession>
<feature type="signal peptide">
    <location>
        <begin position="1"/>
        <end position="21"/>
    </location>
</feature>
<feature type="chain" id="PRO_0000009205" description="Protein FanG">
    <location>
        <begin position="22"/>
        <end position="174"/>
    </location>
</feature>
<feature type="site" description="Required for stability and transport" evidence="1">
    <location>
        <position position="173"/>
    </location>
</feature>
<feature type="disulfide bond" evidence="2">
    <location>
        <begin position="41"/>
        <end position="75"/>
    </location>
</feature>
<dbReference type="EMBL" id="Y00531">
    <property type="protein sequence ID" value="CAA68590.1"/>
    <property type="molecule type" value="Genomic_DNA"/>
</dbReference>
<dbReference type="EMBL" id="S70131">
    <property type="protein sequence ID" value="AAB30307.1"/>
    <property type="molecule type" value="Genomic_DNA"/>
</dbReference>
<dbReference type="PIR" id="S03755">
    <property type="entry name" value="S03755"/>
</dbReference>
<dbReference type="RefSeq" id="WP_000737845.1">
    <property type="nucleotide sequence ID" value="NZ_PUQR01000054.1"/>
</dbReference>
<dbReference type="SMR" id="P20861"/>
<dbReference type="GO" id="GO:0009289">
    <property type="term" value="C:pilus"/>
    <property type="evidence" value="ECO:0007669"/>
    <property type="project" value="UniProtKB-SubCell"/>
</dbReference>
<dbReference type="GO" id="GO:0007155">
    <property type="term" value="P:cell adhesion"/>
    <property type="evidence" value="ECO:0007669"/>
    <property type="project" value="InterPro"/>
</dbReference>
<dbReference type="Gene3D" id="2.60.40.1090">
    <property type="entry name" value="Fimbrial-type adhesion domain"/>
    <property type="match status" value="1"/>
</dbReference>
<dbReference type="InterPro" id="IPR036937">
    <property type="entry name" value="Adhesion_dom_fimbrial_sf"/>
</dbReference>
<dbReference type="InterPro" id="IPR008966">
    <property type="entry name" value="Adhesion_dom_sf"/>
</dbReference>
<dbReference type="InterPro" id="IPR007893">
    <property type="entry name" value="Spore_coat_U/FanG"/>
</dbReference>
<dbReference type="Pfam" id="PF05229">
    <property type="entry name" value="SCPU"/>
    <property type="match status" value="1"/>
</dbReference>
<dbReference type="SUPFAM" id="SSF49401">
    <property type="entry name" value="Bacterial adhesins"/>
    <property type="match status" value="1"/>
</dbReference>